<evidence type="ECO:0000250" key="1">
    <source>
        <dbReference type="UniProtKB" id="P18541"/>
    </source>
</evidence>
<evidence type="ECO:0000255" key="2">
    <source>
        <dbReference type="HAMAP-Rule" id="MF_04087"/>
    </source>
</evidence>
<evidence type="ECO:0000256" key="3">
    <source>
        <dbReference type="SAM" id="MobiDB-lite"/>
    </source>
</evidence>
<accession>Q27YE2</accession>
<organism>
    <name type="scientific">Ippy mammarenavirus (isolate Rat/Central African Republic/Dak An B 188 d/1970)</name>
    <name type="common">IPPYV</name>
    <dbReference type="NCBI Taxonomy" id="3052308"/>
    <lineage>
        <taxon>Viruses</taxon>
        <taxon>Riboviria</taxon>
        <taxon>Orthornavirae</taxon>
        <taxon>Negarnaviricota</taxon>
        <taxon>Polyploviricotina</taxon>
        <taxon>Ellioviricetes</taxon>
        <taxon>Bunyavirales</taxon>
        <taxon>Arenaviridae</taxon>
        <taxon>Mammarenavirus</taxon>
    </lineage>
</organism>
<feature type="initiator methionine" description="Removed; by host" evidence="2">
    <location>
        <position position="1"/>
    </location>
</feature>
<feature type="chain" id="PRO_0000361032" description="RING finger protein Z" evidence="2">
    <location>
        <begin position="2"/>
        <end position="101"/>
    </location>
</feature>
<feature type="zinc finger region" description="RING-type; atypical" evidence="2">
    <location>
        <begin position="38"/>
        <end position="74"/>
    </location>
</feature>
<feature type="region of interest" description="Disordered" evidence="3">
    <location>
        <begin position="1"/>
        <end position="28"/>
    </location>
</feature>
<feature type="region of interest" description="Disordered" evidence="3">
    <location>
        <begin position="82"/>
        <end position="101"/>
    </location>
</feature>
<feature type="short sequence motif" description="PTAP/PSAP motif" evidence="2">
    <location>
        <begin position="88"/>
        <end position="91"/>
    </location>
</feature>
<feature type="short sequence motif" description="PPXY motif" evidence="2">
    <location>
        <begin position="96"/>
        <end position="99"/>
    </location>
</feature>
<feature type="compositionally biased region" description="Basic and acidic residues" evidence="3">
    <location>
        <begin position="1"/>
        <end position="11"/>
    </location>
</feature>
<feature type="compositionally biased region" description="Pro residues" evidence="3">
    <location>
        <begin position="89"/>
        <end position="101"/>
    </location>
</feature>
<feature type="lipid moiety-binding region" description="N-myristoyl glycine; by host" evidence="2">
    <location>
        <position position="2"/>
    </location>
</feature>
<reference key="1">
    <citation type="journal article" date="2006" name="Virology">
        <title>Phylogeny and evolution of old world arenaviruses.</title>
        <authorList>
            <person name="Emonet S."/>
            <person name="Lemasson J.J."/>
            <person name="Gonzalez J.P."/>
            <person name="de Lamballerie X."/>
            <person name="Charrel R.N."/>
        </authorList>
    </citation>
    <scope>NUCLEOTIDE SEQUENCE [GENOMIC RNA]</scope>
</reference>
<reference key="2">
    <citation type="journal article" date="2008" name="Curr. Opin. Microbiol.">
        <title>Phylogeny of the genus Arenavirus.</title>
        <authorList>
            <person name="Charrel R.N."/>
            <person name="de Lamballerie X."/>
            <person name="Emonet S."/>
        </authorList>
    </citation>
    <scope>NUCLEOTIDE SEQUENCE [GENOMIC RNA]</scope>
</reference>
<protein>
    <recommendedName>
        <fullName evidence="2">RING finger protein Z</fullName>
        <shortName evidence="2">Protein Z</shortName>
    </recommendedName>
    <alternativeName>
        <fullName evidence="2">Zinc-binding protein</fullName>
    </alternativeName>
</protein>
<name>Z_IPPYV</name>
<gene>
    <name evidence="2" type="primary">Z</name>
</gene>
<keyword id="KW-1032">Host cell membrane</keyword>
<keyword id="KW-1035">Host cytoplasm</keyword>
<keyword id="KW-1043">Host membrane</keyword>
<keyword id="KW-0945">Host-virus interaction</keyword>
<keyword id="KW-0449">Lipoprotein</keyword>
<keyword id="KW-0472">Membrane</keyword>
<keyword id="KW-0479">Metal-binding</keyword>
<keyword id="KW-0519">Myristate</keyword>
<keyword id="KW-1198">Viral budding</keyword>
<keyword id="KW-1187">Viral budding via the host ESCRT complexes</keyword>
<keyword id="KW-1188">Viral release from host cell</keyword>
<keyword id="KW-0946">Virion</keyword>
<keyword id="KW-0862">Zinc</keyword>
<keyword id="KW-0863">Zinc-finger</keyword>
<sequence>MGQNQSRDKQKAIQNQPKDTGNRADIIPDATGMGPEFCKSCWFERRSLVACNNHYLCMNCLTLLLSVSERCPICKLPLPQKLKLTSSPSAPPSPSPPPYSP</sequence>
<proteinExistence type="inferred from homology"/>
<organismHost>
    <name type="scientific">Praomys</name>
    <name type="common">African soft-furred rats</name>
    <dbReference type="NCBI Taxonomy" id="10111"/>
</organismHost>
<comment type="function">
    <text evidence="1 2">Plays a crucial role in virion assembly and budding. Expressed late in the virus life cycle, it acts as an inhibitor of viral transcription and RNA synthesis by interacting with the viral polymerase L. Presumably recruits the NP encapsidated genome to cellular membranes at budding sites via direct interaction with NP. Plays critical roles in the final steps of viral release by interacting with host TSG101, a member of the vacuolar protein-sorting pathway and using other cellular host proteins involved in vesicle formation pathway. The budding of the virus progeny occurs after association of protein Z with the viral glycoprotein complex SSP-GP1-GP2 at the cell periphery, step that requires myristoylation of protein Z. Also selectively represses protein production by associating with host eIF4E (By similarity). In cell-based minigenome assay, has an inhibitory effect on the ribonucleoprotein machinery (vRNP), which is responsible for the replication and transcription of the viral genome (By similarity).</text>
</comment>
<comment type="subunit">
    <text evidence="2">Interacts with protein NP; this interaction probably directs the encapsidated genome to budding sites. Interacts (via RING domain) with polymerase L; this interaction inhibits viral transcription and replication, Z partially blocks the product exit tunnel for the releasing nascent RNA product. Interacts with the glycoprotein complex; this interaction plays a role in virion budding. Interacts with host eIF4E; this interaction results in eIF4E reduced affinity for its substrate, the 5'-m7 G cap structure. Interacts (via late-budding domain) with host TSG101; this interaction is essential for budding and release of viral particles. Interacts with host RPLP0; this interaction may serve to load ribosome-like particles inside the virion. Interacts with host PML; this interaction induces PML bodies redistribution in the cytoplasm upon viral infection.</text>
</comment>
<comment type="subcellular location">
    <subcellularLocation>
        <location evidence="2">Virion</location>
    </subcellularLocation>
    <subcellularLocation>
        <location evidence="2">Host cytoplasm</location>
        <location evidence="2">Host perinuclear region</location>
    </subcellularLocation>
    <subcellularLocation>
        <location evidence="2">Host cell membrane</location>
        <topology evidence="2">Lipid-anchor</topology>
        <orientation evidence="2">Cytoplasmic side</orientation>
    </subcellularLocation>
    <text evidence="2">Mainly perinuclear. During budding, associates at the inner side of the plasma membrane of infected cells.</text>
</comment>
<comment type="domain">
    <text evidence="2">Late-budding domains (L domains) are short sequence motifs essential for viral particle budding. They recruit proteins of the host ESCRT machinery (Endosomal Sorting Complex Required for Transport) or ESCRT-associated proteins.</text>
</comment>
<comment type="PTM">
    <text evidence="1">Myristoylation is required for the role of RING finger protein Z in assembly and budding.</text>
</comment>
<comment type="similarity">
    <text>Belongs to the arenaviridae Z protein family.</text>
</comment>
<dbReference type="EMBL" id="DQ328878">
    <property type="protein sequence ID" value="ABC71142.1"/>
    <property type="molecule type" value="Genomic_RNA"/>
</dbReference>
<dbReference type="RefSeq" id="YP_516232.1">
    <property type="nucleotide sequence ID" value="NC_007906.1"/>
</dbReference>
<dbReference type="GeneID" id="3953119"/>
<dbReference type="KEGG" id="vg:3953119"/>
<dbReference type="OrthoDB" id="23344at10239"/>
<dbReference type="Proteomes" id="UP000009261">
    <property type="component" value="Genome"/>
</dbReference>
<dbReference type="GO" id="GO:0044220">
    <property type="term" value="C:host cell perinuclear region of cytoplasm"/>
    <property type="evidence" value="ECO:0007669"/>
    <property type="project" value="UniProtKB-SubCell"/>
</dbReference>
<dbReference type="GO" id="GO:0020002">
    <property type="term" value="C:host cell plasma membrane"/>
    <property type="evidence" value="ECO:0007669"/>
    <property type="project" value="UniProtKB-SubCell"/>
</dbReference>
<dbReference type="GO" id="GO:0016020">
    <property type="term" value="C:membrane"/>
    <property type="evidence" value="ECO:0007669"/>
    <property type="project" value="UniProtKB-UniRule"/>
</dbReference>
<dbReference type="GO" id="GO:0044423">
    <property type="term" value="C:virion component"/>
    <property type="evidence" value="ECO:0007669"/>
    <property type="project" value="UniProtKB-UniRule"/>
</dbReference>
<dbReference type="GO" id="GO:0003723">
    <property type="term" value="F:RNA binding"/>
    <property type="evidence" value="ECO:0007669"/>
    <property type="project" value="UniProtKB-UniRule"/>
</dbReference>
<dbReference type="GO" id="GO:0008270">
    <property type="term" value="F:zinc ion binding"/>
    <property type="evidence" value="ECO:0007669"/>
    <property type="project" value="UniProtKB-UniRule"/>
</dbReference>
<dbReference type="GO" id="GO:0046761">
    <property type="term" value="P:viral budding from plasma membrane"/>
    <property type="evidence" value="ECO:0007669"/>
    <property type="project" value="UniProtKB-UniRule"/>
</dbReference>
<dbReference type="GO" id="GO:0039702">
    <property type="term" value="P:viral budding via host ESCRT complex"/>
    <property type="evidence" value="ECO:0007669"/>
    <property type="project" value="UniProtKB-UniRule"/>
</dbReference>
<dbReference type="Gene3D" id="3.30.160.310">
    <property type="match status" value="1"/>
</dbReference>
<dbReference type="HAMAP" id="MF_04087">
    <property type="entry name" value="ARENA_Z"/>
    <property type="match status" value="1"/>
</dbReference>
<dbReference type="InterPro" id="IPR024183">
    <property type="entry name" value="RING_finger_Z_arenaviridae"/>
</dbReference>
<dbReference type="InterPro" id="IPR038485">
    <property type="entry name" value="Z_RING-type_Znf_sf"/>
</dbReference>
<dbReference type="InterPro" id="IPR003224">
    <property type="entry name" value="Z_RING_Znf"/>
</dbReference>
<dbReference type="Pfam" id="PF03854">
    <property type="entry name" value="zf-P11"/>
    <property type="match status" value="1"/>
</dbReference>
<dbReference type="PIRSF" id="PIRSF004030">
    <property type="entry name" value="Z_ArenaV"/>
    <property type="match status" value="1"/>
</dbReference>
<dbReference type="SUPFAM" id="SSF57850">
    <property type="entry name" value="RING/U-box"/>
    <property type="match status" value="1"/>
</dbReference>